<protein>
    <recommendedName>
        <fullName>U3-lycotoxin-Ls1a</fullName>
    </recommendedName>
    <alternativeName>
        <fullName>Toxin-like structure LSTX-B5</fullName>
    </alternativeName>
</protein>
<reference key="1">
    <citation type="journal article" date="2010" name="Zoology">
        <title>Transcriptome analysis of the venom glands of the Chinese wolf spider Lycosa singoriensis.</title>
        <authorList>
            <person name="Zhang Y."/>
            <person name="Chen J."/>
            <person name="Tang X."/>
            <person name="Wang F."/>
            <person name="Jiang L."/>
            <person name="Xiong X."/>
            <person name="Wang M."/>
            <person name="Rong M."/>
            <person name="Liu Z."/>
            <person name="Liang S."/>
        </authorList>
    </citation>
    <scope>NUCLEOTIDE SEQUENCE [LARGE SCALE MRNA]</scope>
    <source>
        <tissue>Venom gland</tissue>
    </source>
</reference>
<keyword id="KW-1015">Disulfide bond</keyword>
<keyword id="KW-0960">Knottin</keyword>
<keyword id="KW-0964">Secreted</keyword>
<keyword id="KW-0732">Signal</keyword>
<keyword id="KW-0800">Toxin</keyword>
<accession>B6DCQ0</accession>
<sequence>MKFVLLFGVLLVTLFSYSSAEMLDDFDQADEDELLSSIEKEEARAKECTPRFYDCSHDRHSCCRSELFKDVCTCFYPEGGDNEVCTCQQPKHLKYMEKAADKAKKFGGKIKKWFG</sequence>
<comment type="subcellular location">
    <subcellularLocation>
        <location evidence="1">Secreted</location>
    </subcellularLocation>
</comment>
<comment type="tissue specificity">
    <text>Expressed by the venom gland.</text>
</comment>
<comment type="domain">
    <text evidence="1">The presence of a 'disulfide through disulfide knot' structurally defines this protein as a knottin.</text>
</comment>
<comment type="similarity">
    <text evidence="3">Belongs to the neurotoxin 19 (CSTX) family. 01 subfamily.</text>
</comment>
<feature type="signal peptide" evidence="2">
    <location>
        <begin position="1"/>
        <end position="20"/>
    </location>
</feature>
<feature type="propeptide" id="PRO_0000401615" evidence="1">
    <location>
        <begin position="21"/>
        <end position="44"/>
    </location>
</feature>
<feature type="chain" id="PRO_0000401616" description="U3-lycotoxin-Ls1a">
    <location>
        <begin position="45"/>
        <end position="115"/>
    </location>
</feature>
<feature type="disulfide bond" evidence="1">
    <location>
        <begin position="48"/>
        <end position="63"/>
    </location>
</feature>
<feature type="disulfide bond" evidence="1">
    <location>
        <begin position="55"/>
        <end position="72"/>
    </location>
</feature>
<feature type="disulfide bond" evidence="1">
    <location>
        <begin position="62"/>
        <end position="87"/>
    </location>
</feature>
<feature type="disulfide bond" evidence="1">
    <location>
        <begin position="74"/>
        <end position="85"/>
    </location>
</feature>
<proteinExistence type="evidence at transcript level"/>
<dbReference type="EMBL" id="EU925984">
    <property type="protein sequence ID" value="ACI41316.1"/>
    <property type="molecule type" value="mRNA"/>
</dbReference>
<dbReference type="EMBL" id="FM863988">
    <property type="protein sequence ID" value="CAS03586.1"/>
    <property type="molecule type" value="mRNA"/>
</dbReference>
<dbReference type="SMR" id="B6DCQ0"/>
<dbReference type="ArachnoServer" id="AS000938">
    <property type="toxin name" value="U3-lycotoxin-Ls1a"/>
</dbReference>
<dbReference type="GO" id="GO:0005576">
    <property type="term" value="C:extracellular region"/>
    <property type="evidence" value="ECO:0007669"/>
    <property type="project" value="UniProtKB-SubCell"/>
</dbReference>
<dbReference type="GO" id="GO:0090729">
    <property type="term" value="F:toxin activity"/>
    <property type="evidence" value="ECO:0007669"/>
    <property type="project" value="UniProtKB-KW"/>
</dbReference>
<dbReference type="InterPro" id="IPR019553">
    <property type="entry name" value="Spider_toxin_CSTX_knottin"/>
</dbReference>
<dbReference type="InterPro" id="IPR011142">
    <property type="entry name" value="Spider_toxin_CSTX_Knottin_CS"/>
</dbReference>
<dbReference type="Pfam" id="PF10530">
    <property type="entry name" value="Toxin_35"/>
    <property type="match status" value="1"/>
</dbReference>
<dbReference type="PROSITE" id="PS60029">
    <property type="entry name" value="SPIDER_CSTX"/>
    <property type="match status" value="1"/>
</dbReference>
<organism>
    <name type="scientific">Lycosa singoriensis</name>
    <name type="common">Wolf spider</name>
    <name type="synonym">Aranea singoriensis</name>
    <dbReference type="NCBI Taxonomy" id="434756"/>
    <lineage>
        <taxon>Eukaryota</taxon>
        <taxon>Metazoa</taxon>
        <taxon>Ecdysozoa</taxon>
        <taxon>Arthropoda</taxon>
        <taxon>Chelicerata</taxon>
        <taxon>Arachnida</taxon>
        <taxon>Araneae</taxon>
        <taxon>Araneomorphae</taxon>
        <taxon>Entelegynae</taxon>
        <taxon>Lycosoidea</taxon>
        <taxon>Lycosidae</taxon>
        <taxon>Lycosa</taxon>
    </lineage>
</organism>
<name>TX305_LYCSI</name>
<evidence type="ECO:0000250" key="1"/>
<evidence type="ECO:0000255" key="2"/>
<evidence type="ECO:0000305" key="3"/>